<gene>
    <name evidence="1" type="primary">frdD</name>
    <name type="ordered locus">b4151</name>
    <name type="ordered locus">JW4112</name>
</gene>
<evidence type="ECO:0000255" key="1">
    <source>
        <dbReference type="HAMAP-Rule" id="MF_00709"/>
    </source>
</evidence>
<evidence type="ECO:0000269" key="2">
    <source>
    </source>
</evidence>
<evidence type="ECO:0000269" key="3">
    <source>
    </source>
</evidence>
<evidence type="ECO:0000269" key="4">
    <source>
    </source>
</evidence>
<evidence type="ECO:0000269" key="5">
    <source>
    </source>
</evidence>
<evidence type="ECO:0000303" key="6">
    <source>
    </source>
</evidence>
<evidence type="ECO:0007744" key="7">
    <source>
        <dbReference type="PDB" id="1KF6"/>
    </source>
</evidence>
<evidence type="ECO:0007744" key="8">
    <source>
        <dbReference type="PDB" id="1KFY"/>
    </source>
</evidence>
<evidence type="ECO:0007744" key="9">
    <source>
        <dbReference type="PDB" id="1L0V"/>
    </source>
</evidence>
<evidence type="ECO:0007829" key="10">
    <source>
        <dbReference type="PDB" id="1KF6"/>
    </source>
</evidence>
<name>FRDD_ECOLI</name>
<proteinExistence type="evidence at protein level"/>
<feature type="chain" id="PRO_0000196542" description="Fumarate reductase subunit D">
    <location>
        <begin position="1"/>
        <end position="119"/>
    </location>
</feature>
<feature type="topological domain" description="Cytoplasmic" evidence="2">
    <location>
        <begin position="1"/>
        <end position="8"/>
    </location>
</feature>
<feature type="transmembrane region" description="Helical" evidence="2">
    <location>
        <begin position="9"/>
        <end position="35"/>
    </location>
</feature>
<feature type="topological domain" description="Periplasmic" evidence="2">
    <location>
        <begin position="36"/>
        <end position="60"/>
    </location>
</feature>
<feature type="transmembrane region" description="Helical" evidence="2">
    <location>
        <begin position="61"/>
        <end position="89"/>
    </location>
</feature>
<feature type="topological domain" description="Cytoplasmic" evidence="2">
    <location>
        <begin position="90"/>
        <end position="96"/>
    </location>
</feature>
<feature type="transmembrane region" description="Helical" evidence="2">
    <location>
        <begin position="97"/>
        <end position="115"/>
    </location>
</feature>
<feature type="topological domain" description="Periplasmic" evidence="2 4">
    <location>
        <begin position="116"/>
        <end position="119"/>
    </location>
</feature>
<feature type="binding site" evidence="9">
    <location>
        <position position="15"/>
    </location>
    <ligand>
        <name>a menaquinone</name>
        <dbReference type="ChEBI" id="CHEBI:16374"/>
    </ligand>
</feature>
<feature type="helix" evidence="10">
    <location>
        <begin position="11"/>
        <end position="27"/>
    </location>
</feature>
<feature type="helix" evidence="10">
    <location>
        <begin position="29"/>
        <end position="37"/>
    </location>
</feature>
<feature type="helix" evidence="10">
    <location>
        <begin position="40"/>
        <end position="42"/>
    </location>
</feature>
<feature type="turn" evidence="10">
    <location>
        <begin position="47"/>
        <end position="50"/>
    </location>
</feature>
<feature type="helix" evidence="10">
    <location>
        <begin position="52"/>
        <end position="59"/>
    </location>
</feature>
<feature type="helix" evidence="10">
    <location>
        <begin position="62"/>
        <end position="89"/>
    </location>
</feature>
<feature type="helix" evidence="10">
    <location>
        <begin position="97"/>
        <end position="116"/>
    </location>
</feature>
<dbReference type="EMBL" id="J01611">
    <property type="protein sequence ID" value="AAA23440.1"/>
    <property type="molecule type" value="Genomic_DNA"/>
</dbReference>
<dbReference type="EMBL" id="V00277">
    <property type="protein sequence ID" value="CAA23536.1"/>
    <property type="molecule type" value="Genomic_DNA"/>
</dbReference>
<dbReference type="EMBL" id="U14003">
    <property type="protein sequence ID" value="AAA97050.1"/>
    <property type="molecule type" value="Genomic_DNA"/>
</dbReference>
<dbReference type="EMBL" id="U00096">
    <property type="protein sequence ID" value="AAC77111.1"/>
    <property type="molecule type" value="Genomic_DNA"/>
</dbReference>
<dbReference type="EMBL" id="AP009048">
    <property type="protein sequence ID" value="BAE78155.1"/>
    <property type="molecule type" value="Genomic_DNA"/>
</dbReference>
<dbReference type="EMBL" id="AH000876">
    <property type="protein sequence ID" value="AAA23434.1"/>
    <property type="molecule type" value="Genomic_DNA"/>
</dbReference>
<dbReference type="PIR" id="A04431">
    <property type="entry name" value="WMEC13"/>
</dbReference>
<dbReference type="RefSeq" id="NP_418575.1">
    <property type="nucleotide sequence ID" value="NC_000913.3"/>
</dbReference>
<dbReference type="RefSeq" id="WP_000609663.1">
    <property type="nucleotide sequence ID" value="NZ_STEB01000014.1"/>
</dbReference>
<dbReference type="PDB" id="1KF6">
    <property type="method" value="X-ray"/>
    <property type="resolution" value="2.70 A"/>
    <property type="chains" value="D/P=1-119"/>
</dbReference>
<dbReference type="PDB" id="1KFY">
    <property type="method" value="X-ray"/>
    <property type="resolution" value="3.60 A"/>
    <property type="chains" value="D/P=1-119"/>
</dbReference>
<dbReference type="PDB" id="1L0V">
    <property type="method" value="X-ray"/>
    <property type="resolution" value="3.30 A"/>
    <property type="chains" value="D/P=1-119"/>
</dbReference>
<dbReference type="PDB" id="2B76">
    <property type="method" value="X-ray"/>
    <property type="resolution" value="3.30 A"/>
    <property type="chains" value="D/P=1-119"/>
</dbReference>
<dbReference type="PDB" id="3CIR">
    <property type="method" value="X-ray"/>
    <property type="resolution" value="3.65 A"/>
    <property type="chains" value="D/P=1-119"/>
</dbReference>
<dbReference type="PDB" id="3P4P">
    <property type="method" value="X-ray"/>
    <property type="resolution" value="2.80 A"/>
    <property type="chains" value="D/P=1-119"/>
</dbReference>
<dbReference type="PDB" id="3P4Q">
    <property type="method" value="X-ray"/>
    <property type="resolution" value="3.35 A"/>
    <property type="chains" value="D/P=1-119"/>
</dbReference>
<dbReference type="PDB" id="3P4R">
    <property type="method" value="X-ray"/>
    <property type="resolution" value="3.05 A"/>
    <property type="chains" value="D/P=1-119"/>
</dbReference>
<dbReference type="PDB" id="3P4S">
    <property type="method" value="X-ray"/>
    <property type="resolution" value="3.10 A"/>
    <property type="chains" value="D/P=1-119"/>
</dbReference>
<dbReference type="PDB" id="4KX6">
    <property type="method" value="X-ray"/>
    <property type="resolution" value="2.95 A"/>
    <property type="chains" value="D/P=1-119"/>
</dbReference>
<dbReference type="PDB" id="5VPN">
    <property type="method" value="X-ray"/>
    <property type="resolution" value="4.22 A"/>
    <property type="chains" value="D/H=1-119"/>
</dbReference>
<dbReference type="PDB" id="6AWF">
    <property type="method" value="X-ray"/>
    <property type="resolution" value="3.35 A"/>
    <property type="chains" value="D/H=1-119"/>
</dbReference>
<dbReference type="PDBsum" id="1KF6"/>
<dbReference type="PDBsum" id="1KFY"/>
<dbReference type="PDBsum" id="1L0V"/>
<dbReference type="PDBsum" id="2B76"/>
<dbReference type="PDBsum" id="3CIR"/>
<dbReference type="PDBsum" id="3P4P"/>
<dbReference type="PDBsum" id="3P4Q"/>
<dbReference type="PDBsum" id="3P4R"/>
<dbReference type="PDBsum" id="3P4S"/>
<dbReference type="PDBsum" id="4KX6"/>
<dbReference type="PDBsum" id="5VPN"/>
<dbReference type="PDBsum" id="6AWF"/>
<dbReference type="SMR" id="P0A8Q3"/>
<dbReference type="BioGRID" id="4262699">
    <property type="interactions" value="457"/>
</dbReference>
<dbReference type="ComplexPortal" id="CPX-1967">
    <property type="entry name" value="Plasma membrane fumarate reductase complex"/>
</dbReference>
<dbReference type="DIP" id="DIP-9684N"/>
<dbReference type="FunCoup" id="P0A8Q3">
    <property type="interactions" value="468"/>
</dbReference>
<dbReference type="IntAct" id="P0A8Q3">
    <property type="interactions" value="1"/>
</dbReference>
<dbReference type="STRING" id="511145.b4151"/>
<dbReference type="DrugBank" id="DB07490">
    <property type="generic name" value="2-[1-(4-CHLORO-PHENYL)-ETHYL]-4,6-DINITRO-PHENOL"/>
</dbReference>
<dbReference type="DrugBank" id="DB07918">
    <property type="generic name" value="2-heptyl-4-hydroxyquinoline N-oxide"/>
</dbReference>
<dbReference type="jPOST" id="P0A8Q3"/>
<dbReference type="PaxDb" id="511145-b4151"/>
<dbReference type="EnsemblBacteria" id="AAC77111">
    <property type="protein sequence ID" value="AAC77111"/>
    <property type="gene ID" value="b4151"/>
</dbReference>
<dbReference type="GeneID" id="75169672"/>
<dbReference type="GeneID" id="948668"/>
<dbReference type="KEGG" id="ecj:JW4112"/>
<dbReference type="KEGG" id="eco:b4151"/>
<dbReference type="KEGG" id="ecoc:C3026_22440"/>
<dbReference type="PATRIC" id="fig|1411691.4.peg.2547"/>
<dbReference type="EchoBASE" id="EB0329"/>
<dbReference type="eggNOG" id="COG3080">
    <property type="taxonomic scope" value="Bacteria"/>
</dbReference>
<dbReference type="HOGENOM" id="CLU_168367_0_0_6"/>
<dbReference type="InParanoid" id="P0A8Q3"/>
<dbReference type="OMA" id="ACYAFAG"/>
<dbReference type="OrthoDB" id="9804636at2"/>
<dbReference type="PhylomeDB" id="P0A8Q3"/>
<dbReference type="BioCyc" id="EcoCyc:FUM-MEMB2"/>
<dbReference type="BioCyc" id="MetaCyc:FUM-MEMB2"/>
<dbReference type="BRENDA" id="1.3.5.4">
    <property type="organism ID" value="2026"/>
</dbReference>
<dbReference type="EvolutionaryTrace" id="P0A8Q3"/>
<dbReference type="PRO" id="PR:P0A8Q3"/>
<dbReference type="Proteomes" id="UP000000625">
    <property type="component" value="Chromosome"/>
</dbReference>
<dbReference type="GO" id="GO:0045283">
    <property type="term" value="C:fumarate reductase complex"/>
    <property type="evidence" value="ECO:0000314"/>
    <property type="project" value="EcoCyc"/>
</dbReference>
<dbReference type="GO" id="GO:0016020">
    <property type="term" value="C:membrane"/>
    <property type="evidence" value="ECO:0000314"/>
    <property type="project" value="ComplexPortal"/>
</dbReference>
<dbReference type="GO" id="GO:0005886">
    <property type="term" value="C:plasma membrane"/>
    <property type="evidence" value="ECO:0000314"/>
    <property type="project" value="EcoCyc"/>
</dbReference>
<dbReference type="GO" id="GO:0000104">
    <property type="term" value="F:succinate dehydrogenase activity"/>
    <property type="evidence" value="ECO:0007669"/>
    <property type="project" value="UniProtKB-UniRule"/>
</dbReference>
<dbReference type="GO" id="GO:0019645">
    <property type="term" value="P:anaerobic electron transport chain"/>
    <property type="evidence" value="ECO:0000303"/>
    <property type="project" value="ComplexPortal"/>
</dbReference>
<dbReference type="GO" id="GO:0009061">
    <property type="term" value="P:anaerobic respiration"/>
    <property type="evidence" value="ECO:0000315"/>
    <property type="project" value="EcoCyc"/>
</dbReference>
<dbReference type="GO" id="GO:0044780">
    <property type="term" value="P:bacterial-type flagellum assembly"/>
    <property type="evidence" value="ECO:0000315"/>
    <property type="project" value="EcoCyc"/>
</dbReference>
<dbReference type="GO" id="GO:0006113">
    <property type="term" value="P:fermentation"/>
    <property type="evidence" value="ECO:0000315"/>
    <property type="project" value="EcoCyc"/>
</dbReference>
<dbReference type="GO" id="GO:0006106">
    <property type="term" value="P:fumarate metabolic process"/>
    <property type="evidence" value="ECO:0007669"/>
    <property type="project" value="InterPro"/>
</dbReference>
<dbReference type="CDD" id="cd00547">
    <property type="entry name" value="QFR_TypeD_subunitD"/>
    <property type="match status" value="1"/>
</dbReference>
<dbReference type="FunFam" id="1.20.1300.10:FF:000002">
    <property type="entry name" value="Fumarate reductase subunit D"/>
    <property type="match status" value="1"/>
</dbReference>
<dbReference type="Gene3D" id="1.20.1300.10">
    <property type="entry name" value="Fumarate reductase/succinate dehydrogenase, transmembrane subunit"/>
    <property type="match status" value="1"/>
</dbReference>
<dbReference type="HAMAP" id="MF_00709">
    <property type="entry name" value="Fumarate_red_D"/>
    <property type="match status" value="1"/>
</dbReference>
<dbReference type="InterPro" id="IPR003418">
    <property type="entry name" value="Fumarate_red_D"/>
</dbReference>
<dbReference type="InterPro" id="IPR034804">
    <property type="entry name" value="SQR/QFR_C/D"/>
</dbReference>
<dbReference type="NCBIfam" id="NF003977">
    <property type="entry name" value="PRK05470.1-1"/>
    <property type="match status" value="1"/>
</dbReference>
<dbReference type="Pfam" id="PF02313">
    <property type="entry name" value="Fumarate_red_D"/>
    <property type="match status" value="1"/>
</dbReference>
<dbReference type="PIRSF" id="PIRSF000179">
    <property type="entry name" value="FrdD"/>
    <property type="match status" value="1"/>
</dbReference>
<dbReference type="SUPFAM" id="SSF81343">
    <property type="entry name" value="Fumarate reductase respiratory complex transmembrane subunits"/>
    <property type="match status" value="1"/>
</dbReference>
<comment type="function">
    <text evidence="2 3">Two distinct, membrane-bound, FAD-containing enzymes are responsible for the catalysis of fumarate and succinate interconversion; fumarate reductase is used in anaerobic growth, and succinate dehydrogenase is used in aerobic growth. Anchors the catalytic components of the fumarate reductase complex to the cell inner membrane, binds quinones (PubMed:10373108). The QFR enzyme complex binds 2 quinones in or near the membrane; 1 near the [3Fe-4S] cluster (QP is proximal to the [3Fe-4S] cluster, on the cytoplasmic side of the membrane) while QD (the distal cluster) is on the other side of the membrane. It is not clear if both of the quinol-binding sites are functionally relevant (PubMed:10373108, PubMed:11850430).</text>
</comment>
<comment type="subunit">
    <text evidence="1 2 3">Part of an enzyme complex containing four subunits: a flavoprotein (FrdA), an iron-sulfur protein (FrdB), and two hydrophobic anchor proteins (FrdC and FrdD).</text>
</comment>
<comment type="subcellular location">
    <subcellularLocation>
        <location evidence="1 4">Cell inner membrane</location>
        <topology evidence="1 2">Multi-pass membrane protein</topology>
    </subcellularLocation>
</comment>
<comment type="induction">
    <text evidence="5">Regulated at the transcriptional level in response to the cellular availability of the alternate electron acceptors oxygen, nitrate, and fumarate.</text>
</comment>
<comment type="similarity">
    <text evidence="1">Belongs to the FrdD family.</text>
</comment>
<keyword id="KW-0002">3D-structure</keyword>
<keyword id="KW-0997">Cell inner membrane</keyword>
<keyword id="KW-1003">Cell membrane</keyword>
<keyword id="KW-0472">Membrane</keyword>
<keyword id="KW-1185">Reference proteome</keyword>
<keyword id="KW-0812">Transmembrane</keyword>
<keyword id="KW-1133">Transmembrane helix</keyword>
<reference key="1">
    <citation type="journal article" date="1982" name="Proc. Natl. Acad. Sci. U.S.A.">
        <title>Overlap between ampC and frd operons on the Escherichia coli chromosome.</title>
        <authorList>
            <person name="Grundstroem T."/>
            <person name="Jaurin B."/>
        </authorList>
    </citation>
    <scope>NUCLEOTIDE SEQUENCE [GENOMIC DNA]</scope>
    <source>
        <strain>K12</strain>
    </source>
</reference>
<reference key="2">
    <citation type="journal article" date="1995" name="Nucleic Acids Res.">
        <title>Analysis of the Escherichia coli genome VI: DNA sequence of the region from 92.8 through 100 minutes.</title>
        <authorList>
            <person name="Burland V.D."/>
            <person name="Plunkett G. III"/>
            <person name="Sofia H.J."/>
            <person name="Daniels D.L."/>
            <person name="Blattner F.R."/>
        </authorList>
    </citation>
    <scope>NUCLEOTIDE SEQUENCE [LARGE SCALE GENOMIC DNA]</scope>
    <source>
        <strain>K12 / MG1655 / ATCC 47076</strain>
    </source>
</reference>
<reference key="3">
    <citation type="journal article" date="1997" name="Science">
        <title>The complete genome sequence of Escherichia coli K-12.</title>
        <authorList>
            <person name="Blattner F.R."/>
            <person name="Plunkett G. III"/>
            <person name="Bloch C.A."/>
            <person name="Perna N.T."/>
            <person name="Burland V."/>
            <person name="Riley M."/>
            <person name="Collado-Vides J."/>
            <person name="Glasner J.D."/>
            <person name="Rode C.K."/>
            <person name="Mayhew G.F."/>
            <person name="Gregor J."/>
            <person name="Davis N.W."/>
            <person name="Kirkpatrick H.A."/>
            <person name="Goeden M.A."/>
            <person name="Rose D.J."/>
            <person name="Mau B."/>
            <person name="Shao Y."/>
        </authorList>
    </citation>
    <scope>NUCLEOTIDE SEQUENCE [LARGE SCALE GENOMIC DNA]</scope>
    <source>
        <strain>K12 / MG1655 / ATCC 47076</strain>
    </source>
</reference>
<reference key="4">
    <citation type="journal article" date="2006" name="Mol. Syst. Biol.">
        <title>Highly accurate genome sequences of Escherichia coli K-12 strains MG1655 and W3110.</title>
        <authorList>
            <person name="Hayashi K."/>
            <person name="Morooka N."/>
            <person name="Yamamoto Y."/>
            <person name="Fujita K."/>
            <person name="Isono K."/>
            <person name="Choi S."/>
            <person name="Ohtsubo E."/>
            <person name="Baba T."/>
            <person name="Wanner B.L."/>
            <person name="Mori H."/>
            <person name="Horiuchi T."/>
        </authorList>
    </citation>
    <scope>NUCLEOTIDE SEQUENCE [LARGE SCALE GENOMIC DNA]</scope>
    <source>
        <strain>K12 / W3110 / ATCC 27325 / DSM 5911</strain>
    </source>
</reference>
<reference key="5">
    <citation type="journal article" date="1983" name="Proc. Natl. Acad. Sci. U.S.A.">
        <title>ampC beta-lactamase hyperproduction in Escherichia coli: natural ampicillin resistance generated by horizontal chromosomal DNA transfer from Shigella.</title>
        <authorList>
            <person name="Olsson O."/>
            <person name="Bergstroem S."/>
            <person name="Lindberg F.P."/>
            <person name="Normark S."/>
        </authorList>
    </citation>
    <scope>NUCLEOTIDE SEQUENCE [GENOMIC DNA] OF 82-119</scope>
</reference>
<reference key="6">
    <citation type="journal article" date="1985" name="J. Bacteriol.">
        <title>Transcription of the Escherichia coli fumarate reductase genes (frdABCD) and their coordinate regulation by oxygen, nitrate, and fumarate.</title>
        <authorList>
            <person name="Jones H.M."/>
            <person name="Gunsalus R.P."/>
        </authorList>
    </citation>
    <scope>NUCLEOTIDE SEQUENCE [GENOMIC DNA] OF 109-119</scope>
    <scope>INDUCTION</scope>
</reference>
<reference key="7">
    <citation type="journal article" date="2005" name="Science">
        <title>Global topology analysis of the Escherichia coli inner membrane proteome.</title>
        <authorList>
            <person name="Daley D.O."/>
            <person name="Rapp M."/>
            <person name="Granseth E."/>
            <person name="Melen K."/>
            <person name="Drew D."/>
            <person name="von Heijne G."/>
        </authorList>
    </citation>
    <scope>TOPOLOGY [LARGE SCALE ANALYSIS]</scope>
    <scope>SUBCELLULAR LOCATION</scope>
    <source>
        <strain>K12 / MG1655 / ATCC 47076</strain>
    </source>
</reference>
<reference key="8">
    <citation type="journal article" date="1999" name="Science">
        <title>Structure of the Escherichia coli fumarate reductase respiratory complex.</title>
        <authorList>
            <person name="Iverson T.M."/>
            <person name="Luna-Chavez C."/>
            <person name="Cecchini G."/>
            <person name="Rees D.C."/>
        </authorList>
    </citation>
    <scope>X-RAY CRYSTALLOGRAPHY (3.3 ANGSTROMS) IN COMPLEX WITH MENAQUINONE</scope>
    <scope>FUNCTION</scope>
    <scope>SUBUNIT</scope>
    <scope>SUBCELLULAR LOCATION</scope>
    <scope>TOPOLOGY</scope>
</reference>
<reference evidence="7 8 9" key="9">
    <citation type="journal article" date="2002" name="J. Biol. Chem.">
        <title>Crystallographic studies of the Escherichia coli quinol-fumarate reductase with inhibitors bound to the quinol-binding site.</title>
        <authorList>
            <person name="Iverson T.M."/>
            <person name="Luna-Chavez C."/>
            <person name="Croal L.R."/>
            <person name="Cecchini G."/>
            <person name="Rees D.C."/>
        </authorList>
    </citation>
    <scope>X-RAY CRYSTALLOGRAPHY (2.7 ANGSTROMS) IN COMPLEX WITH MENAQUINONE AND INHIBITORS</scope>
    <scope>SUBUNIT</scope>
</reference>
<sequence length="119" mass="13107">MINPNPKRSDEPVFWGLFGAGGMWSAIIAPVMILLVGILLPLGLFPGDALSYERVLAFAQSFIGRVFLFLMIVLPLWCGLHRMHHAMHDLKIHVPAGKWVFYGLAAILTVVTLIGVVTI</sequence>
<organism>
    <name type="scientific">Escherichia coli (strain K12)</name>
    <dbReference type="NCBI Taxonomy" id="83333"/>
    <lineage>
        <taxon>Bacteria</taxon>
        <taxon>Pseudomonadati</taxon>
        <taxon>Pseudomonadota</taxon>
        <taxon>Gammaproteobacteria</taxon>
        <taxon>Enterobacterales</taxon>
        <taxon>Enterobacteriaceae</taxon>
        <taxon>Escherichia</taxon>
    </lineage>
</organism>
<accession>P0A8Q3</accession>
<accession>P03806</accession>
<accession>Q2M6F1</accession>
<accession>Q47048</accession>
<protein>
    <recommendedName>
        <fullName evidence="1">Fumarate reductase subunit D</fullName>
    </recommendedName>
    <alternativeName>
        <fullName evidence="1">Fumarate reductase 13 kDa hydrophobic protein</fullName>
    </alternativeName>
    <alternativeName>
        <fullName evidence="1 6">Quinol-fumarate reductase subunit D</fullName>
        <shortName evidence="1 6">QFR subunit D</shortName>
    </alternativeName>
</protein>